<proteinExistence type="inferred from homology"/>
<reference key="1">
    <citation type="journal article" date="2011" name="MBio">
        <title>Novel metabolic attributes of the genus Cyanothece, comprising a group of unicellular nitrogen-fixing Cyanobacteria.</title>
        <authorList>
            <person name="Bandyopadhyay A."/>
            <person name="Elvitigala T."/>
            <person name="Welsh E."/>
            <person name="Stockel J."/>
            <person name="Liberton M."/>
            <person name="Min H."/>
            <person name="Sherman L.A."/>
            <person name="Pakrasi H.B."/>
        </authorList>
    </citation>
    <scope>NUCLEOTIDE SEQUENCE [LARGE SCALE GENOMIC DNA]</scope>
    <source>
        <strain>PCC 7425 / ATCC 29141</strain>
    </source>
</reference>
<comment type="similarity">
    <text evidence="1">Belongs to the CinA family.</text>
</comment>
<protein>
    <recommendedName>
        <fullName evidence="1">CinA-like protein</fullName>
    </recommendedName>
</protein>
<name>CINAL_CYAP4</name>
<gene>
    <name type="ordered locus">Cyan7425_1676</name>
</gene>
<dbReference type="EMBL" id="CP001344">
    <property type="protein sequence ID" value="ACL44045.1"/>
    <property type="molecule type" value="Genomic_DNA"/>
</dbReference>
<dbReference type="SMR" id="B8HR57"/>
<dbReference type="STRING" id="395961.Cyan7425_1676"/>
<dbReference type="KEGG" id="cyn:Cyan7425_1676"/>
<dbReference type="eggNOG" id="COG1058">
    <property type="taxonomic scope" value="Bacteria"/>
</dbReference>
<dbReference type="eggNOG" id="COG1546">
    <property type="taxonomic scope" value="Bacteria"/>
</dbReference>
<dbReference type="HOGENOM" id="CLU_030805_9_3_3"/>
<dbReference type="OrthoDB" id="9801454at2"/>
<dbReference type="CDD" id="cd00885">
    <property type="entry name" value="cinA"/>
    <property type="match status" value="1"/>
</dbReference>
<dbReference type="Gene3D" id="3.90.950.20">
    <property type="entry name" value="CinA-like"/>
    <property type="match status" value="1"/>
</dbReference>
<dbReference type="Gene3D" id="3.40.980.10">
    <property type="entry name" value="MoaB/Mog-like domain"/>
    <property type="match status" value="1"/>
</dbReference>
<dbReference type="HAMAP" id="MF_00226_B">
    <property type="entry name" value="CinA_B"/>
    <property type="match status" value="1"/>
</dbReference>
<dbReference type="InterPro" id="IPR050101">
    <property type="entry name" value="CinA"/>
</dbReference>
<dbReference type="InterPro" id="IPR036653">
    <property type="entry name" value="CinA-like_C"/>
</dbReference>
<dbReference type="InterPro" id="IPR008136">
    <property type="entry name" value="CinA_C"/>
</dbReference>
<dbReference type="InterPro" id="IPR041424">
    <property type="entry name" value="CinA_KH"/>
</dbReference>
<dbReference type="InterPro" id="IPR008135">
    <property type="entry name" value="Competence-induced_CinA"/>
</dbReference>
<dbReference type="InterPro" id="IPR036425">
    <property type="entry name" value="MoaB/Mog-like_dom_sf"/>
</dbReference>
<dbReference type="InterPro" id="IPR001453">
    <property type="entry name" value="MoaB/Mog_dom"/>
</dbReference>
<dbReference type="NCBIfam" id="TIGR00200">
    <property type="entry name" value="cinA_nterm"/>
    <property type="match status" value="1"/>
</dbReference>
<dbReference type="NCBIfam" id="TIGR00199">
    <property type="entry name" value="PncC_domain"/>
    <property type="match status" value="1"/>
</dbReference>
<dbReference type="NCBIfam" id="NF001813">
    <property type="entry name" value="PRK00549.1"/>
    <property type="match status" value="1"/>
</dbReference>
<dbReference type="PANTHER" id="PTHR13939">
    <property type="entry name" value="NICOTINAMIDE-NUCLEOTIDE AMIDOHYDROLASE PNCC"/>
    <property type="match status" value="1"/>
</dbReference>
<dbReference type="PANTHER" id="PTHR13939:SF0">
    <property type="entry name" value="NMN AMIDOHYDROLASE-LIKE PROTEIN YFAY"/>
    <property type="match status" value="1"/>
</dbReference>
<dbReference type="Pfam" id="PF02464">
    <property type="entry name" value="CinA"/>
    <property type="match status" value="1"/>
</dbReference>
<dbReference type="Pfam" id="PF18146">
    <property type="entry name" value="CinA_KH"/>
    <property type="match status" value="1"/>
</dbReference>
<dbReference type="Pfam" id="PF00994">
    <property type="entry name" value="MoCF_biosynth"/>
    <property type="match status" value="1"/>
</dbReference>
<dbReference type="PIRSF" id="PIRSF006728">
    <property type="entry name" value="CinA"/>
    <property type="match status" value="1"/>
</dbReference>
<dbReference type="SMART" id="SM00852">
    <property type="entry name" value="MoCF_biosynth"/>
    <property type="match status" value="1"/>
</dbReference>
<dbReference type="SUPFAM" id="SSF142433">
    <property type="entry name" value="CinA-like"/>
    <property type="match status" value="1"/>
</dbReference>
<dbReference type="SUPFAM" id="SSF53218">
    <property type="entry name" value="Molybdenum cofactor biosynthesis proteins"/>
    <property type="match status" value="1"/>
</dbReference>
<accession>B8HR57</accession>
<evidence type="ECO:0000255" key="1">
    <source>
        <dbReference type="HAMAP-Rule" id="MF_00226"/>
    </source>
</evidence>
<sequence>MNQSAEIICVGTELLLGEILNSNAQFLAQQLAQLGIPHYYQTVVGDNPVRLKKAVAIACERSRLLIFTGGLGPTPDDLTTETLADFFDLPLVEHPEILADITRKYAHRGRTITANNRKQALLPLGAAILPNPTGTAPGMIWHPRPSLTVLTFPGVPSEMQCMWQETAIPYLRAQGWGQEMIYSQVLRFWGIAESALAERVAPFLELASPTVAPYASHGEARLRISVRAANETEALEQIQPIATQIHQLTGLDCYGSDEDSLASVLGKLLHSRQETLSVAESCTGGGLGQMLTAIPGSSAYFWGGVISYDNQVKISLLGVDPDTLTRVGAVSAAVAEQMALGVRSRLETTWGLSITGIAGPGGGTETKPVGLVYIGLAGPAGVEHYECRFSDFRGRDWIRHLSACTALDYLRRKLLTLG</sequence>
<organism>
    <name type="scientific">Cyanothece sp. (strain PCC 7425 / ATCC 29141)</name>
    <dbReference type="NCBI Taxonomy" id="395961"/>
    <lineage>
        <taxon>Bacteria</taxon>
        <taxon>Bacillati</taxon>
        <taxon>Cyanobacteriota</taxon>
        <taxon>Cyanophyceae</taxon>
        <taxon>Gomontiellales</taxon>
        <taxon>Cyanothecaceae</taxon>
        <taxon>Cyanothece</taxon>
    </lineage>
</organism>
<feature type="chain" id="PRO_1000124981" description="CinA-like protein">
    <location>
        <begin position="1"/>
        <end position="418"/>
    </location>
</feature>